<sequence length="353" mass="38965">MTAILERRESESLWGRFCNWITSTENRLYIGWFGVLMIPTLLTATSVFIIAFIAAPPVDIDGIREPVSGSLLYGNNIISGAIIPTSAAIGLHFYPIWEAASVDEWLYNGGPYELIVLHFLLGVACYMGREWELSFRLGMRPWIAVAYSAPVAAATAVFLIYPIGQGSFSDGMPLGISGTFNFMIVFQAEHNILMHPFHMLGVAGVFGGSLFSAMHGSLVTSSLIRETTENESANEGYRFGQEEETYNIVAAHGYFGRLIFQYASFNNSRSLHFFLAAWPVVGIWFTALGISTMAFNLNGFNFNQSVVDSQGRVINTWADIINRANLGMEVMHERNAHNFPLDLAAVEVPSTNG</sequence>
<comment type="function">
    <text evidence="1">Photosystem II (PSII) is a light-driven water:plastoquinone oxidoreductase that uses light energy to abstract electrons from H(2)O, generating O(2) and a proton gradient subsequently used for ATP formation. It consists of a core antenna complex that captures photons, and an electron transfer chain that converts photonic excitation into a charge separation. The D1/D2 (PsbA/PsbD) reaction center heterodimer binds P680, the primary electron donor of PSII as well as several subsequent electron acceptors.</text>
</comment>
<comment type="catalytic activity">
    <reaction evidence="1">
        <text>2 a plastoquinone + 4 hnu + 2 H2O = 2 a plastoquinol + O2</text>
        <dbReference type="Rhea" id="RHEA:36359"/>
        <dbReference type="Rhea" id="RHEA-COMP:9561"/>
        <dbReference type="Rhea" id="RHEA-COMP:9562"/>
        <dbReference type="ChEBI" id="CHEBI:15377"/>
        <dbReference type="ChEBI" id="CHEBI:15379"/>
        <dbReference type="ChEBI" id="CHEBI:17757"/>
        <dbReference type="ChEBI" id="CHEBI:30212"/>
        <dbReference type="ChEBI" id="CHEBI:62192"/>
        <dbReference type="EC" id="1.10.3.9"/>
    </reaction>
</comment>
<comment type="cofactor">
    <text evidence="1">The D1/D2 heterodimer binds P680, chlorophylls that are the primary electron donor of PSII, and subsequent electron acceptors. It shares a non-heme iron and each subunit binds pheophytin, quinone, additional chlorophylls, carotenoids and lipids. D1 provides most of the ligands for the Mn4-Ca-O5 cluster of the oxygen-evolving complex (OEC). There is also a Cl(-1) ion associated with D1 and D2, which is required for oxygen evolution. The PSII complex binds additional chlorophylls, carotenoids and specific lipids.</text>
</comment>
<comment type="subunit">
    <text evidence="1">PSII is composed of 1 copy each of membrane proteins PsbA, PsbB, PsbC, PsbD, PsbE, PsbF, PsbH, PsbI, PsbJ, PsbK, PsbL, PsbM, PsbT, PsbX, PsbY, PsbZ, Psb30/Ycf12, at least 3 peripheral proteins of the oxygen-evolving complex and a large number of cofactors. It forms dimeric complexes.</text>
</comment>
<comment type="subcellular location">
    <subcellularLocation>
        <location evidence="1">Plastid</location>
        <location evidence="1">Chloroplast thylakoid membrane</location>
        <topology evidence="1">Multi-pass membrane protein</topology>
    </subcellularLocation>
</comment>
<comment type="PTM">
    <text evidence="1">Tyr-161 forms a radical intermediate that is referred to as redox-active TyrZ, YZ or Y-Z.</text>
</comment>
<comment type="PTM">
    <text evidence="1">C-terminally processed by CTPA; processing is essential to allow assembly of the oxygen-evolving complex and thus photosynthetic growth.</text>
</comment>
<comment type="miscellaneous">
    <text evidence="1">2 of the reaction center chlorophylls (ChlD1 and ChlD2) are entirely coordinated by water.</text>
</comment>
<comment type="miscellaneous">
    <text evidence="1">Herbicides such as atrazine, BNT, diuron or ioxynil bind in the Q(B) binding site and block subsequent electron transfer.</text>
</comment>
<comment type="similarity">
    <text evidence="1">Belongs to the reaction center PufL/M/PsbA/D family.</text>
</comment>
<name>PSBA_POPTR</name>
<organism>
    <name type="scientific">Populus trichocarpa</name>
    <name type="common">Western balsam poplar</name>
    <name type="synonym">Populus balsamifera subsp. trichocarpa</name>
    <dbReference type="NCBI Taxonomy" id="3694"/>
    <lineage>
        <taxon>Eukaryota</taxon>
        <taxon>Viridiplantae</taxon>
        <taxon>Streptophyta</taxon>
        <taxon>Embryophyta</taxon>
        <taxon>Tracheophyta</taxon>
        <taxon>Spermatophyta</taxon>
        <taxon>Magnoliopsida</taxon>
        <taxon>eudicotyledons</taxon>
        <taxon>Gunneridae</taxon>
        <taxon>Pentapetalae</taxon>
        <taxon>rosids</taxon>
        <taxon>fabids</taxon>
        <taxon>Malpighiales</taxon>
        <taxon>Salicaceae</taxon>
        <taxon>Saliceae</taxon>
        <taxon>Populus</taxon>
    </lineage>
</organism>
<feature type="initiator methionine" description="Removed" evidence="1">
    <location>
        <position position="1"/>
    </location>
</feature>
<feature type="chain" id="PRO_0000340058" description="Photosystem II protein D1" evidence="1">
    <location>
        <begin position="2"/>
        <end position="344"/>
    </location>
</feature>
<feature type="propeptide" id="PRO_0000340059" evidence="1">
    <location>
        <begin position="345"/>
        <end position="353"/>
    </location>
</feature>
<feature type="transmembrane region" description="Helical" evidence="1">
    <location>
        <begin position="29"/>
        <end position="46"/>
    </location>
</feature>
<feature type="transmembrane region" description="Helical" evidence="1">
    <location>
        <begin position="118"/>
        <end position="133"/>
    </location>
</feature>
<feature type="transmembrane region" description="Helical" evidence="1">
    <location>
        <begin position="142"/>
        <end position="156"/>
    </location>
</feature>
<feature type="transmembrane region" description="Helical" evidence="1">
    <location>
        <begin position="197"/>
        <end position="218"/>
    </location>
</feature>
<feature type="transmembrane region" description="Helical" evidence="1">
    <location>
        <begin position="274"/>
        <end position="288"/>
    </location>
</feature>
<feature type="binding site" description="axial binding residue" evidence="1">
    <location>
        <position position="118"/>
    </location>
    <ligand>
        <name>chlorophyll a</name>
        <dbReference type="ChEBI" id="CHEBI:58416"/>
        <label>ChlzD1</label>
    </ligand>
    <ligandPart>
        <name>Mg</name>
        <dbReference type="ChEBI" id="CHEBI:25107"/>
    </ligandPart>
</feature>
<feature type="binding site" evidence="1">
    <location>
        <position position="126"/>
    </location>
    <ligand>
        <name>pheophytin a</name>
        <dbReference type="ChEBI" id="CHEBI:136840"/>
        <label>D1</label>
    </ligand>
</feature>
<feature type="binding site" evidence="1">
    <location>
        <position position="170"/>
    </location>
    <ligand>
        <name>[CaMn4O5] cluster</name>
        <dbReference type="ChEBI" id="CHEBI:189552"/>
    </ligand>
</feature>
<feature type="binding site" evidence="1">
    <location>
        <position position="189"/>
    </location>
    <ligand>
        <name>[CaMn4O5] cluster</name>
        <dbReference type="ChEBI" id="CHEBI:189552"/>
    </ligand>
</feature>
<feature type="binding site" description="axial binding residue" evidence="1">
    <location>
        <position position="198"/>
    </location>
    <ligand>
        <name>chlorophyll a</name>
        <dbReference type="ChEBI" id="CHEBI:58416"/>
        <label>PD1</label>
    </ligand>
    <ligandPart>
        <name>Mg</name>
        <dbReference type="ChEBI" id="CHEBI:25107"/>
    </ligandPart>
</feature>
<feature type="binding site" evidence="1">
    <location>
        <position position="215"/>
    </location>
    <ligand>
        <name>a quinone</name>
        <dbReference type="ChEBI" id="CHEBI:132124"/>
        <label>B</label>
    </ligand>
</feature>
<feature type="binding site" evidence="1">
    <location>
        <position position="215"/>
    </location>
    <ligand>
        <name>Fe cation</name>
        <dbReference type="ChEBI" id="CHEBI:24875"/>
        <note>ligand shared with heterodimeric partner</note>
    </ligand>
</feature>
<feature type="binding site" evidence="1">
    <location>
        <begin position="264"/>
        <end position="265"/>
    </location>
    <ligand>
        <name>a quinone</name>
        <dbReference type="ChEBI" id="CHEBI:132124"/>
        <label>B</label>
    </ligand>
</feature>
<feature type="binding site" evidence="1">
    <location>
        <position position="272"/>
    </location>
    <ligand>
        <name>Fe cation</name>
        <dbReference type="ChEBI" id="CHEBI:24875"/>
        <note>ligand shared with heterodimeric partner</note>
    </ligand>
</feature>
<feature type="binding site" evidence="1">
    <location>
        <position position="332"/>
    </location>
    <ligand>
        <name>[CaMn4O5] cluster</name>
        <dbReference type="ChEBI" id="CHEBI:189552"/>
    </ligand>
</feature>
<feature type="binding site" evidence="1">
    <location>
        <position position="333"/>
    </location>
    <ligand>
        <name>[CaMn4O5] cluster</name>
        <dbReference type="ChEBI" id="CHEBI:189552"/>
    </ligand>
</feature>
<feature type="binding site" evidence="1">
    <location>
        <position position="342"/>
    </location>
    <ligand>
        <name>[CaMn4O5] cluster</name>
        <dbReference type="ChEBI" id="CHEBI:189552"/>
    </ligand>
</feature>
<feature type="binding site" evidence="1">
    <location>
        <position position="344"/>
    </location>
    <ligand>
        <name>[CaMn4O5] cluster</name>
        <dbReference type="ChEBI" id="CHEBI:189552"/>
    </ligand>
</feature>
<feature type="site" description="Tyrosine radical intermediate" evidence="1">
    <location>
        <position position="161"/>
    </location>
</feature>
<feature type="site" description="Stabilizes free radical intermediate" evidence="1">
    <location>
        <position position="190"/>
    </location>
</feature>
<feature type="site" description="Cleavage; by CTPA" evidence="1">
    <location>
        <begin position="344"/>
        <end position="345"/>
    </location>
</feature>
<feature type="modified residue" description="N-acetylthreonine" evidence="1">
    <location>
        <position position="2"/>
    </location>
</feature>
<feature type="modified residue" description="Phosphothreonine" evidence="1">
    <location>
        <position position="2"/>
    </location>
</feature>
<dbReference type="EC" id="1.10.3.9" evidence="1"/>
<dbReference type="EMBL" id="EF146768">
    <property type="protein sequence ID" value="ABK94815.1"/>
    <property type="molecule type" value="mRNA"/>
</dbReference>
<dbReference type="EMBL" id="EF489041">
    <property type="protein sequence ID" value="ABO36683.1"/>
    <property type="molecule type" value="Genomic_DNA"/>
</dbReference>
<dbReference type="RefSeq" id="YP_001109480.1">
    <property type="nucleotide sequence ID" value="NC_009143.1"/>
</dbReference>
<dbReference type="SMR" id="A4GYN9"/>
<dbReference type="FunCoup" id="A4GYN9">
    <property type="interactions" value="328"/>
</dbReference>
<dbReference type="STRING" id="3694.A4GYN9"/>
<dbReference type="EnsemblPlants" id="Potri.013G138300.1.v4.1">
    <property type="protein sequence ID" value="Potri.013G138300.1.v4.1"/>
    <property type="gene ID" value="Potri.013G138300.v4.1"/>
</dbReference>
<dbReference type="GeneID" id="4929629"/>
<dbReference type="Gramene" id="Potri.013G138300.1.v4.1">
    <property type="protein sequence ID" value="Potri.013G138300.1.v4.1"/>
    <property type="gene ID" value="Potri.013G138300.v4.1"/>
</dbReference>
<dbReference type="KEGG" id="pop:4929629"/>
<dbReference type="InParanoid" id="A4GYN9"/>
<dbReference type="OMA" id="HERNANN"/>
<dbReference type="OrthoDB" id="812726at2759"/>
<dbReference type="Proteomes" id="UP000006729">
    <property type="component" value="Chloroplast"/>
</dbReference>
<dbReference type="GO" id="GO:0009535">
    <property type="term" value="C:chloroplast thylakoid membrane"/>
    <property type="evidence" value="ECO:0007669"/>
    <property type="project" value="UniProtKB-SubCell"/>
</dbReference>
<dbReference type="GO" id="GO:0009523">
    <property type="term" value="C:photosystem II"/>
    <property type="evidence" value="ECO:0000318"/>
    <property type="project" value="GO_Central"/>
</dbReference>
<dbReference type="GO" id="GO:0016168">
    <property type="term" value="F:chlorophyll binding"/>
    <property type="evidence" value="ECO:0007669"/>
    <property type="project" value="UniProtKB-UniRule"/>
</dbReference>
<dbReference type="GO" id="GO:0045156">
    <property type="term" value="F:electron transporter, transferring electrons within the cyclic electron transport pathway of photosynthesis activity"/>
    <property type="evidence" value="ECO:0007669"/>
    <property type="project" value="InterPro"/>
</dbReference>
<dbReference type="GO" id="GO:0005506">
    <property type="term" value="F:iron ion binding"/>
    <property type="evidence" value="ECO:0007669"/>
    <property type="project" value="UniProtKB-UniRule"/>
</dbReference>
<dbReference type="GO" id="GO:0016682">
    <property type="term" value="F:oxidoreductase activity, acting on diphenols and related substances as donors, oxygen as acceptor"/>
    <property type="evidence" value="ECO:0007669"/>
    <property type="project" value="UniProtKB-UniRule"/>
</dbReference>
<dbReference type="GO" id="GO:0010242">
    <property type="term" value="F:oxygen evolving activity"/>
    <property type="evidence" value="ECO:0007669"/>
    <property type="project" value="UniProtKB-EC"/>
</dbReference>
<dbReference type="GO" id="GO:0009772">
    <property type="term" value="P:photosynthetic electron transport in photosystem II"/>
    <property type="evidence" value="ECO:0007669"/>
    <property type="project" value="InterPro"/>
</dbReference>
<dbReference type="GO" id="GO:0009635">
    <property type="term" value="P:response to herbicide"/>
    <property type="evidence" value="ECO:0007669"/>
    <property type="project" value="UniProtKB-KW"/>
</dbReference>
<dbReference type="CDD" id="cd09289">
    <property type="entry name" value="Photosystem-II_D1"/>
    <property type="match status" value="1"/>
</dbReference>
<dbReference type="FunFam" id="1.20.85.10:FF:000002">
    <property type="entry name" value="Photosystem II protein D1"/>
    <property type="match status" value="1"/>
</dbReference>
<dbReference type="Gene3D" id="1.20.85.10">
    <property type="entry name" value="Photosystem II protein D1-like"/>
    <property type="match status" value="1"/>
</dbReference>
<dbReference type="HAMAP" id="MF_01379">
    <property type="entry name" value="PSII_PsbA_D1"/>
    <property type="match status" value="1"/>
</dbReference>
<dbReference type="InterPro" id="IPR055266">
    <property type="entry name" value="D1/D2"/>
</dbReference>
<dbReference type="InterPro" id="IPR036854">
    <property type="entry name" value="Photo_II_D1/D2_sf"/>
</dbReference>
<dbReference type="InterPro" id="IPR000484">
    <property type="entry name" value="Photo_RC_L/M"/>
</dbReference>
<dbReference type="InterPro" id="IPR055265">
    <property type="entry name" value="Photo_RC_L/M_CS"/>
</dbReference>
<dbReference type="InterPro" id="IPR005867">
    <property type="entry name" value="PSII_D1"/>
</dbReference>
<dbReference type="NCBIfam" id="TIGR01151">
    <property type="entry name" value="psbA"/>
    <property type="match status" value="1"/>
</dbReference>
<dbReference type="PANTHER" id="PTHR33149:SF12">
    <property type="entry name" value="PHOTOSYSTEM II D2 PROTEIN"/>
    <property type="match status" value="1"/>
</dbReference>
<dbReference type="PANTHER" id="PTHR33149">
    <property type="entry name" value="PHOTOSYSTEM II PROTEIN D1"/>
    <property type="match status" value="1"/>
</dbReference>
<dbReference type="Pfam" id="PF00124">
    <property type="entry name" value="Photo_RC"/>
    <property type="match status" value="1"/>
</dbReference>
<dbReference type="PRINTS" id="PR00256">
    <property type="entry name" value="REACTNCENTRE"/>
</dbReference>
<dbReference type="SUPFAM" id="SSF81483">
    <property type="entry name" value="Bacterial photosystem II reaction centre, L and M subunits"/>
    <property type="match status" value="1"/>
</dbReference>
<dbReference type="PROSITE" id="PS00244">
    <property type="entry name" value="REACTION_CENTER"/>
    <property type="match status" value="1"/>
</dbReference>
<protein>
    <recommendedName>
        <fullName evidence="1">Photosystem II protein D1</fullName>
        <shortName evidence="1">PSII D1 protein</shortName>
        <ecNumber evidence="1">1.10.3.9</ecNumber>
    </recommendedName>
    <alternativeName>
        <fullName evidence="1">Photosystem II Q(B) protein</fullName>
    </alternativeName>
</protein>
<keyword id="KW-0007">Acetylation</keyword>
<keyword id="KW-0106">Calcium</keyword>
<keyword id="KW-0148">Chlorophyll</keyword>
<keyword id="KW-0150">Chloroplast</keyword>
<keyword id="KW-0157">Chromophore</keyword>
<keyword id="KW-0249">Electron transport</keyword>
<keyword id="KW-0359">Herbicide resistance</keyword>
<keyword id="KW-0408">Iron</keyword>
<keyword id="KW-0460">Magnesium</keyword>
<keyword id="KW-0464">Manganese</keyword>
<keyword id="KW-0472">Membrane</keyword>
<keyword id="KW-0479">Metal-binding</keyword>
<keyword id="KW-0560">Oxidoreductase</keyword>
<keyword id="KW-0597">Phosphoprotein</keyword>
<keyword id="KW-0602">Photosynthesis</keyword>
<keyword id="KW-0604">Photosystem II</keyword>
<keyword id="KW-0934">Plastid</keyword>
<keyword id="KW-1185">Reference proteome</keyword>
<keyword id="KW-0793">Thylakoid</keyword>
<keyword id="KW-0812">Transmembrane</keyword>
<keyword id="KW-1133">Transmembrane helix</keyword>
<keyword id="KW-0813">Transport</keyword>
<accession>A4GYN9</accession>
<gene>
    <name evidence="1" type="primary">psbA</name>
    <name type="ordered locus">Poptr_cp001</name>
</gene>
<reference key="1">
    <citation type="journal article" date="2006" name="Science">
        <title>The genome of black cottonwood, Populus trichocarpa (Torr. &amp; Gray).</title>
        <authorList>
            <person name="Tuskan G.A."/>
            <person name="Difazio S."/>
            <person name="Jansson S."/>
            <person name="Bohlmann J."/>
            <person name="Grigoriev I."/>
            <person name="Hellsten U."/>
            <person name="Putnam N."/>
            <person name="Ralph S."/>
            <person name="Rombauts S."/>
            <person name="Salamov A."/>
            <person name="Schein J."/>
            <person name="Sterck L."/>
            <person name="Aerts A."/>
            <person name="Bhalerao R.R."/>
            <person name="Bhalerao R.P."/>
            <person name="Blaudez D."/>
            <person name="Boerjan W."/>
            <person name="Brun A."/>
            <person name="Brunner A."/>
            <person name="Busov V."/>
            <person name="Campbell M."/>
            <person name="Carlson J."/>
            <person name="Chalot M."/>
            <person name="Chapman J."/>
            <person name="Chen G.-L."/>
            <person name="Cooper D."/>
            <person name="Coutinho P.M."/>
            <person name="Couturier J."/>
            <person name="Covert S."/>
            <person name="Cronk Q."/>
            <person name="Cunningham R."/>
            <person name="Davis J."/>
            <person name="Degroeve S."/>
            <person name="Dejardin A."/>
            <person name="dePamphilis C.W."/>
            <person name="Detter J."/>
            <person name="Dirks B."/>
            <person name="Dubchak I."/>
            <person name="Duplessis S."/>
            <person name="Ehlting J."/>
            <person name="Ellis B."/>
            <person name="Gendler K."/>
            <person name="Goodstein D."/>
            <person name="Gribskov M."/>
            <person name="Grimwood J."/>
            <person name="Groover A."/>
            <person name="Gunter L."/>
            <person name="Hamberger B."/>
            <person name="Heinze B."/>
            <person name="Helariutta Y."/>
            <person name="Henrissat B."/>
            <person name="Holligan D."/>
            <person name="Holt R."/>
            <person name="Huang W."/>
            <person name="Islam-Faridi N."/>
            <person name="Jones S."/>
            <person name="Jones-Rhoades M."/>
            <person name="Jorgensen R."/>
            <person name="Joshi C."/>
            <person name="Kangasjaervi J."/>
            <person name="Karlsson J."/>
            <person name="Kelleher C."/>
            <person name="Kirkpatrick R."/>
            <person name="Kirst M."/>
            <person name="Kohler A."/>
            <person name="Kalluri U."/>
            <person name="Larimer F."/>
            <person name="Leebens-Mack J."/>
            <person name="Leple J.-C."/>
            <person name="Locascio P."/>
            <person name="Lou Y."/>
            <person name="Lucas S."/>
            <person name="Martin F."/>
            <person name="Montanini B."/>
            <person name="Napoli C."/>
            <person name="Nelson D.R."/>
            <person name="Nelson C."/>
            <person name="Nieminen K."/>
            <person name="Nilsson O."/>
            <person name="Pereda V."/>
            <person name="Peter G."/>
            <person name="Philippe R."/>
            <person name="Pilate G."/>
            <person name="Poliakov A."/>
            <person name="Razumovskaya J."/>
            <person name="Richardson P."/>
            <person name="Rinaldi C."/>
            <person name="Ritland K."/>
            <person name="Rouze P."/>
            <person name="Ryaboy D."/>
            <person name="Schmutz J."/>
            <person name="Schrader J."/>
            <person name="Segerman B."/>
            <person name="Shin H."/>
            <person name="Siddiqui A."/>
            <person name="Sterky F."/>
            <person name="Terry A."/>
            <person name="Tsai C.-J."/>
            <person name="Uberbacher E."/>
            <person name="Unneberg P."/>
            <person name="Vahala J."/>
            <person name="Wall K."/>
            <person name="Wessler S."/>
            <person name="Yang G."/>
            <person name="Yin T."/>
            <person name="Douglas C."/>
            <person name="Marra M."/>
            <person name="Sandberg G."/>
            <person name="Van de Peer Y."/>
            <person name="Rokhsar D.S."/>
        </authorList>
    </citation>
    <scope>NUCLEOTIDE SEQUENCE [LARGE SCALE GENOMIC DNA]</scope>
    <source>
        <strain>cv. Nisqually</strain>
    </source>
</reference>
<reference key="2">
    <citation type="submission" date="2006-11" db="EMBL/GenBank/DDBJ databases">
        <title>The poplar transcriptome: analysis of ca. 4,700 sequence-verified full-length cDNAs.</title>
        <authorList>
            <person name="Ralph S.G."/>
            <person name="Chun H.J.E."/>
            <person name="Cooper D."/>
            <person name="Kirkpatrick R."/>
            <person name="Palmquist D."/>
            <person name="Wynhoven B."/>
            <person name="Kolosova N."/>
            <person name="Oddy C."/>
            <person name="Jancsik S."/>
            <person name="Douglas C.J."/>
            <person name="Liu J."/>
            <person name="Butterfield Y.S.N."/>
            <person name="Stott J."/>
            <person name="Yang G."/>
            <person name="Holt R.A."/>
            <person name="Siddiqui A."/>
            <person name="Jones S.J.M."/>
            <person name="Marra M.A."/>
            <person name="Ritland K."/>
            <person name="Bohlmann J."/>
        </authorList>
    </citation>
    <scope>NUCLEOTIDE SEQUENCE [LARGE SCALE MRNA]</scope>
    <source>
        <tissue>Leaf</tissue>
    </source>
</reference>
<geneLocation type="chloroplast"/>
<evidence type="ECO:0000255" key="1">
    <source>
        <dbReference type="HAMAP-Rule" id="MF_01379"/>
    </source>
</evidence>
<proteinExistence type="evidence at transcript level"/>